<keyword id="KW-0067">ATP-binding</keyword>
<keyword id="KW-0143">Chaperone</keyword>
<keyword id="KW-0547">Nucleotide-binding</keyword>
<keyword id="KW-0597">Phosphoprotein</keyword>
<keyword id="KW-1185">Reference proteome</keyword>
<keyword id="KW-0346">Stress response</keyword>
<sequence length="620" mass="66683">MGRAVGIDLGTTNSVVSVLEGGEAKVIANSEGSRTTPSIVAFAKNGEVLVGQSAKNQAVANVDRTIRSVKRHMGTDWKVSIDDKEYTAPEISARTLQKLKRDAESYLGEDVTDAVITVPAYFNDAQRQATKDAGQIAGLNVLRIVNEPTAAALAYGLEKGDKEQTILVFDLGGGTFDVSLLEIGDGVVEVRATAGDNELGGDDWDQRIVDWLADKFKASHGVDLTKDKMALQRLREAAEKAKIELSSSQQASINLPYITVDEDRNPLFLDETLTRTEFQKITQDLLDRTKTPFQAVLKDAEISVDEIDHVVLVGGSTRMVAVSELVTELTNGKEPNKGVNPDEVVAVGAALQAGVLRGEVKDVLLLDVTPLSLGIETKGGVMTKLIERNTTIPTKRSETFTTAEDSQPSVQIQVFQGEREMAAHNKLLGSFELAGIAPAPRGVPQIEVTFDIDANGIVSVSAKDKATGKENTIKIQDGSGLSQEEIDRMVKDAETHAEEDKKRREEQEVRNSAESMAYQTRKFVEDNKDKVSEDTQNKVEEAAKAVDEALKGDDIEAIKDAVEKLNAESQEMGKAIYEAEAAAGAEGAGADAAGSAANDDPNVVDAEVVDEDTSAEDDKK</sequence>
<evidence type="ECO:0000255" key="1">
    <source>
        <dbReference type="HAMAP-Rule" id="MF_00332"/>
    </source>
</evidence>
<evidence type="ECO:0000256" key="2">
    <source>
        <dbReference type="SAM" id="MobiDB-lite"/>
    </source>
</evidence>
<protein>
    <recommendedName>
        <fullName evidence="1">Chaperone protein DnaK</fullName>
    </recommendedName>
    <alternativeName>
        <fullName evidence="1">HSP70</fullName>
    </alternativeName>
    <alternativeName>
        <fullName evidence="1">Heat shock 70 kDa protein</fullName>
    </alternativeName>
    <alternativeName>
        <fullName evidence="1">Heat shock protein 70</fullName>
    </alternativeName>
</protein>
<comment type="function">
    <text evidence="1">Acts as a chaperone.</text>
</comment>
<comment type="induction">
    <text evidence="1">By stress conditions e.g. heat shock.</text>
</comment>
<comment type="similarity">
    <text evidence="1">Belongs to the heat shock protein 70 family.</text>
</comment>
<dbReference type="EMBL" id="CR931997">
    <property type="protein sequence ID" value="CAI36331.1"/>
    <property type="molecule type" value="Genomic_DNA"/>
</dbReference>
<dbReference type="RefSeq" id="WP_005297124.1">
    <property type="nucleotide sequence ID" value="NC_007164.1"/>
</dbReference>
<dbReference type="SMR" id="Q4JXX6"/>
<dbReference type="STRING" id="306537.jk0179"/>
<dbReference type="GeneID" id="92737666"/>
<dbReference type="KEGG" id="cjk:jk0179"/>
<dbReference type="eggNOG" id="COG0443">
    <property type="taxonomic scope" value="Bacteria"/>
</dbReference>
<dbReference type="HOGENOM" id="CLU_005965_2_1_11"/>
<dbReference type="OrthoDB" id="9766019at2"/>
<dbReference type="Proteomes" id="UP000000545">
    <property type="component" value="Chromosome"/>
</dbReference>
<dbReference type="GO" id="GO:0005524">
    <property type="term" value="F:ATP binding"/>
    <property type="evidence" value="ECO:0007669"/>
    <property type="project" value="UniProtKB-UniRule"/>
</dbReference>
<dbReference type="GO" id="GO:0140662">
    <property type="term" value="F:ATP-dependent protein folding chaperone"/>
    <property type="evidence" value="ECO:0007669"/>
    <property type="project" value="InterPro"/>
</dbReference>
<dbReference type="GO" id="GO:0051082">
    <property type="term" value="F:unfolded protein binding"/>
    <property type="evidence" value="ECO:0007669"/>
    <property type="project" value="InterPro"/>
</dbReference>
<dbReference type="CDD" id="cd10234">
    <property type="entry name" value="ASKHA_NBD_HSP70_DnaK-like"/>
    <property type="match status" value="1"/>
</dbReference>
<dbReference type="FunFam" id="2.60.34.10:FF:000014">
    <property type="entry name" value="Chaperone protein DnaK HSP70"/>
    <property type="match status" value="1"/>
</dbReference>
<dbReference type="FunFam" id="1.20.1270.10:FF:000001">
    <property type="entry name" value="Molecular chaperone DnaK"/>
    <property type="match status" value="1"/>
</dbReference>
<dbReference type="FunFam" id="3.30.420.40:FF:000071">
    <property type="entry name" value="Molecular chaperone DnaK"/>
    <property type="match status" value="1"/>
</dbReference>
<dbReference type="FunFam" id="3.90.640.10:FF:000003">
    <property type="entry name" value="Molecular chaperone DnaK"/>
    <property type="match status" value="1"/>
</dbReference>
<dbReference type="Gene3D" id="1.20.1270.10">
    <property type="match status" value="1"/>
</dbReference>
<dbReference type="Gene3D" id="3.30.420.40">
    <property type="match status" value="2"/>
</dbReference>
<dbReference type="Gene3D" id="3.90.640.10">
    <property type="entry name" value="Actin, Chain A, domain 4"/>
    <property type="match status" value="1"/>
</dbReference>
<dbReference type="Gene3D" id="2.60.34.10">
    <property type="entry name" value="Substrate Binding Domain Of DNAk, Chain A, domain 1"/>
    <property type="match status" value="1"/>
</dbReference>
<dbReference type="HAMAP" id="MF_00332">
    <property type="entry name" value="DnaK"/>
    <property type="match status" value="1"/>
</dbReference>
<dbReference type="InterPro" id="IPR043129">
    <property type="entry name" value="ATPase_NBD"/>
</dbReference>
<dbReference type="InterPro" id="IPR012725">
    <property type="entry name" value="Chaperone_DnaK"/>
</dbReference>
<dbReference type="InterPro" id="IPR018181">
    <property type="entry name" value="Heat_shock_70_CS"/>
</dbReference>
<dbReference type="InterPro" id="IPR029048">
    <property type="entry name" value="HSP70_C_sf"/>
</dbReference>
<dbReference type="InterPro" id="IPR029047">
    <property type="entry name" value="HSP70_peptide-bd_sf"/>
</dbReference>
<dbReference type="InterPro" id="IPR013126">
    <property type="entry name" value="Hsp_70_fam"/>
</dbReference>
<dbReference type="NCBIfam" id="NF001413">
    <property type="entry name" value="PRK00290.1"/>
    <property type="match status" value="1"/>
</dbReference>
<dbReference type="NCBIfam" id="TIGR02350">
    <property type="entry name" value="prok_dnaK"/>
    <property type="match status" value="1"/>
</dbReference>
<dbReference type="PANTHER" id="PTHR19375">
    <property type="entry name" value="HEAT SHOCK PROTEIN 70KDA"/>
    <property type="match status" value="1"/>
</dbReference>
<dbReference type="Pfam" id="PF00012">
    <property type="entry name" value="HSP70"/>
    <property type="match status" value="1"/>
</dbReference>
<dbReference type="PRINTS" id="PR00301">
    <property type="entry name" value="HEATSHOCK70"/>
</dbReference>
<dbReference type="SUPFAM" id="SSF53067">
    <property type="entry name" value="Actin-like ATPase domain"/>
    <property type="match status" value="2"/>
</dbReference>
<dbReference type="SUPFAM" id="SSF100934">
    <property type="entry name" value="Heat shock protein 70kD (HSP70), C-terminal subdomain"/>
    <property type="match status" value="1"/>
</dbReference>
<dbReference type="SUPFAM" id="SSF100920">
    <property type="entry name" value="Heat shock protein 70kD (HSP70), peptide-binding domain"/>
    <property type="match status" value="1"/>
</dbReference>
<dbReference type="PROSITE" id="PS00297">
    <property type="entry name" value="HSP70_1"/>
    <property type="match status" value="1"/>
</dbReference>
<dbReference type="PROSITE" id="PS00329">
    <property type="entry name" value="HSP70_2"/>
    <property type="match status" value="1"/>
</dbReference>
<gene>
    <name evidence="1" type="primary">dnaK</name>
    <name type="ordered locus">jk0179</name>
</gene>
<accession>Q4JXX6</accession>
<proteinExistence type="inferred from homology"/>
<organism>
    <name type="scientific">Corynebacterium jeikeium (strain K411)</name>
    <dbReference type="NCBI Taxonomy" id="306537"/>
    <lineage>
        <taxon>Bacteria</taxon>
        <taxon>Bacillati</taxon>
        <taxon>Actinomycetota</taxon>
        <taxon>Actinomycetes</taxon>
        <taxon>Mycobacteriales</taxon>
        <taxon>Corynebacteriaceae</taxon>
        <taxon>Corynebacterium</taxon>
    </lineage>
</organism>
<reference key="1">
    <citation type="journal article" date="2005" name="J. Bacteriol.">
        <title>Complete genome sequence and analysis of the multiresistant nosocomial pathogen Corynebacterium jeikeium K411, a lipid-requiring bacterium of the human skin flora.</title>
        <authorList>
            <person name="Tauch A."/>
            <person name="Kaiser O."/>
            <person name="Hain T."/>
            <person name="Goesmann A."/>
            <person name="Weisshaar B."/>
            <person name="Albersmeier A."/>
            <person name="Bekel T."/>
            <person name="Bischoff N."/>
            <person name="Brune I."/>
            <person name="Chakraborty T."/>
            <person name="Kalinowski J."/>
            <person name="Meyer F."/>
            <person name="Rupp O."/>
            <person name="Schneiker S."/>
            <person name="Viehoever P."/>
            <person name="Puehler A."/>
        </authorList>
    </citation>
    <scope>NUCLEOTIDE SEQUENCE [LARGE SCALE GENOMIC DNA]</scope>
    <source>
        <strain>K411</strain>
    </source>
</reference>
<feature type="chain" id="PRO_0000225954" description="Chaperone protein DnaK">
    <location>
        <begin position="1"/>
        <end position="620"/>
    </location>
</feature>
<feature type="region of interest" description="Disordered" evidence="2">
    <location>
        <begin position="492"/>
        <end position="519"/>
    </location>
</feature>
<feature type="region of interest" description="Disordered" evidence="2">
    <location>
        <begin position="583"/>
        <end position="620"/>
    </location>
</feature>
<feature type="compositionally biased region" description="Basic and acidic residues" evidence="2">
    <location>
        <begin position="492"/>
        <end position="511"/>
    </location>
</feature>
<feature type="compositionally biased region" description="Low complexity" evidence="2">
    <location>
        <begin position="583"/>
        <end position="597"/>
    </location>
</feature>
<feature type="compositionally biased region" description="Acidic residues" evidence="2">
    <location>
        <begin position="607"/>
        <end position="620"/>
    </location>
</feature>
<feature type="modified residue" description="Phosphothreonine; by autocatalysis" evidence="1">
    <location>
        <position position="175"/>
    </location>
</feature>
<name>DNAK_CORJK</name>